<evidence type="ECO:0000255" key="1">
    <source>
        <dbReference type="HAMAP-Rule" id="MF_00127"/>
    </source>
</evidence>
<dbReference type="EC" id="6.1.1.21" evidence="1"/>
<dbReference type="EMBL" id="CP000792">
    <property type="protein sequence ID" value="EAT98631.1"/>
    <property type="molecule type" value="Genomic_DNA"/>
</dbReference>
<dbReference type="RefSeq" id="WP_012001784.1">
    <property type="nucleotide sequence ID" value="NC_009802.2"/>
</dbReference>
<dbReference type="SMR" id="A7ZDK1"/>
<dbReference type="STRING" id="360104.CCC13826_1272"/>
<dbReference type="KEGG" id="cco:CCC13826_1272"/>
<dbReference type="eggNOG" id="COG0124">
    <property type="taxonomic scope" value="Bacteria"/>
</dbReference>
<dbReference type="HOGENOM" id="CLU_025113_1_1_7"/>
<dbReference type="OrthoDB" id="9800814at2"/>
<dbReference type="Proteomes" id="UP000001121">
    <property type="component" value="Chromosome"/>
</dbReference>
<dbReference type="GO" id="GO:0005737">
    <property type="term" value="C:cytoplasm"/>
    <property type="evidence" value="ECO:0007669"/>
    <property type="project" value="UniProtKB-SubCell"/>
</dbReference>
<dbReference type="GO" id="GO:0005524">
    <property type="term" value="F:ATP binding"/>
    <property type="evidence" value="ECO:0007669"/>
    <property type="project" value="UniProtKB-UniRule"/>
</dbReference>
<dbReference type="GO" id="GO:0004821">
    <property type="term" value="F:histidine-tRNA ligase activity"/>
    <property type="evidence" value="ECO:0007669"/>
    <property type="project" value="UniProtKB-UniRule"/>
</dbReference>
<dbReference type="GO" id="GO:0006427">
    <property type="term" value="P:histidyl-tRNA aminoacylation"/>
    <property type="evidence" value="ECO:0007669"/>
    <property type="project" value="UniProtKB-UniRule"/>
</dbReference>
<dbReference type="CDD" id="cd00773">
    <property type="entry name" value="HisRS-like_core"/>
    <property type="match status" value="1"/>
</dbReference>
<dbReference type="Gene3D" id="3.40.50.800">
    <property type="entry name" value="Anticodon-binding domain"/>
    <property type="match status" value="1"/>
</dbReference>
<dbReference type="Gene3D" id="3.30.930.10">
    <property type="entry name" value="Bira Bifunctional Protein, Domain 2"/>
    <property type="match status" value="1"/>
</dbReference>
<dbReference type="HAMAP" id="MF_00127">
    <property type="entry name" value="His_tRNA_synth"/>
    <property type="match status" value="1"/>
</dbReference>
<dbReference type="InterPro" id="IPR006195">
    <property type="entry name" value="aa-tRNA-synth_II"/>
</dbReference>
<dbReference type="InterPro" id="IPR045864">
    <property type="entry name" value="aa-tRNA-synth_II/BPL/LPL"/>
</dbReference>
<dbReference type="InterPro" id="IPR004154">
    <property type="entry name" value="Anticodon-bd"/>
</dbReference>
<dbReference type="InterPro" id="IPR036621">
    <property type="entry name" value="Anticodon-bd_dom_sf"/>
</dbReference>
<dbReference type="InterPro" id="IPR015807">
    <property type="entry name" value="His-tRNA-ligase"/>
</dbReference>
<dbReference type="InterPro" id="IPR041715">
    <property type="entry name" value="HisRS-like_core"/>
</dbReference>
<dbReference type="InterPro" id="IPR004516">
    <property type="entry name" value="HisRS/HisZ"/>
</dbReference>
<dbReference type="NCBIfam" id="TIGR00442">
    <property type="entry name" value="hisS"/>
    <property type="match status" value="1"/>
</dbReference>
<dbReference type="PANTHER" id="PTHR43707:SF1">
    <property type="entry name" value="HISTIDINE--TRNA LIGASE, MITOCHONDRIAL-RELATED"/>
    <property type="match status" value="1"/>
</dbReference>
<dbReference type="PANTHER" id="PTHR43707">
    <property type="entry name" value="HISTIDYL-TRNA SYNTHETASE"/>
    <property type="match status" value="1"/>
</dbReference>
<dbReference type="Pfam" id="PF03129">
    <property type="entry name" value="HGTP_anticodon"/>
    <property type="match status" value="1"/>
</dbReference>
<dbReference type="Pfam" id="PF13393">
    <property type="entry name" value="tRNA-synt_His"/>
    <property type="match status" value="1"/>
</dbReference>
<dbReference type="PIRSF" id="PIRSF001549">
    <property type="entry name" value="His-tRNA_synth"/>
    <property type="match status" value="1"/>
</dbReference>
<dbReference type="SUPFAM" id="SSF52954">
    <property type="entry name" value="Class II aaRS ABD-related"/>
    <property type="match status" value="1"/>
</dbReference>
<dbReference type="SUPFAM" id="SSF55681">
    <property type="entry name" value="Class II aaRS and biotin synthetases"/>
    <property type="match status" value="1"/>
</dbReference>
<dbReference type="PROSITE" id="PS50862">
    <property type="entry name" value="AA_TRNA_LIGASE_II"/>
    <property type="match status" value="1"/>
</dbReference>
<protein>
    <recommendedName>
        <fullName evidence="1">Histidine--tRNA ligase</fullName>
        <ecNumber evidence="1">6.1.1.21</ecNumber>
    </recommendedName>
    <alternativeName>
        <fullName evidence="1">Histidyl-tRNA synthetase</fullName>
        <shortName evidence="1">HisRS</shortName>
    </alternativeName>
</protein>
<name>SYH_CAMC1</name>
<gene>
    <name evidence="1" type="primary">hisS</name>
    <name type="ordered locus">Ccon26_09950</name>
    <name type="ORF">CCC13826_1272</name>
</gene>
<proteinExistence type="inferred from homology"/>
<keyword id="KW-0030">Aminoacyl-tRNA synthetase</keyword>
<keyword id="KW-0067">ATP-binding</keyword>
<keyword id="KW-0963">Cytoplasm</keyword>
<keyword id="KW-0436">Ligase</keyword>
<keyword id="KW-0547">Nucleotide-binding</keyword>
<keyword id="KW-0648">Protein biosynthesis</keyword>
<feature type="chain" id="PRO_1000016333" description="Histidine--tRNA ligase">
    <location>
        <begin position="1"/>
        <end position="408"/>
    </location>
</feature>
<accession>A7ZDK1</accession>
<comment type="catalytic activity">
    <reaction evidence="1">
        <text>tRNA(His) + L-histidine + ATP = L-histidyl-tRNA(His) + AMP + diphosphate + H(+)</text>
        <dbReference type="Rhea" id="RHEA:17313"/>
        <dbReference type="Rhea" id="RHEA-COMP:9665"/>
        <dbReference type="Rhea" id="RHEA-COMP:9689"/>
        <dbReference type="ChEBI" id="CHEBI:15378"/>
        <dbReference type="ChEBI" id="CHEBI:30616"/>
        <dbReference type="ChEBI" id="CHEBI:33019"/>
        <dbReference type="ChEBI" id="CHEBI:57595"/>
        <dbReference type="ChEBI" id="CHEBI:78442"/>
        <dbReference type="ChEBI" id="CHEBI:78527"/>
        <dbReference type="ChEBI" id="CHEBI:456215"/>
        <dbReference type="EC" id="6.1.1.21"/>
    </reaction>
</comment>
<comment type="subunit">
    <text evidence="1">Homodimer.</text>
</comment>
<comment type="subcellular location">
    <subcellularLocation>
        <location evidence="1">Cytoplasm</location>
    </subcellularLocation>
</comment>
<comment type="similarity">
    <text evidence="1">Belongs to the class-II aminoacyl-tRNA synthetase family.</text>
</comment>
<organism>
    <name type="scientific">Campylobacter concisus (strain 13826)</name>
    <dbReference type="NCBI Taxonomy" id="360104"/>
    <lineage>
        <taxon>Bacteria</taxon>
        <taxon>Pseudomonadati</taxon>
        <taxon>Campylobacterota</taxon>
        <taxon>Epsilonproteobacteria</taxon>
        <taxon>Campylobacterales</taxon>
        <taxon>Campylobacteraceae</taxon>
        <taxon>Campylobacter</taxon>
    </lineage>
</organism>
<sequence length="408" mass="46381">MITALRGMKDMLPARAKLYAQIIKTCEEVAKNYGYEQILTPHLEETALFKRSVGESSDIVGKEMYQFEDKGGNDVCLRPEGTAGVVRAFIEAKLDRANVTKRCFYHGSMFRYERPQKGRLREFHQFGCECFGEGSVYEDASIILMVSEIFNRLNIKTTLKINSLGDESSMKSYKEKLVKFLDENDDKICEDCKRRKLLNPIRVLDCKIESCQEIYKNAPVITDSLSDEAQADFAKLQEILTANGVKFEIDTKLVRGLDYYCKTAFEFISNEIGSQSAVAGGGRYDRLVEYLGGRASYGVGFAMGVERIMEILGEAGDERDGVYLCALDAANVDFIYNLGSKLRKKYQVEISYEAKKLQKHLQNADNKNAKIFLCVGENEMKENKIWYKNLETKDEKTINLDELEKELG</sequence>
<reference key="1">
    <citation type="submission" date="2007-10" db="EMBL/GenBank/DDBJ databases">
        <title>Genome sequence of Campylobacter concisus 13826 isolated from human feces.</title>
        <authorList>
            <person name="Fouts D.E."/>
            <person name="Mongodin E.F."/>
            <person name="Puiu D."/>
            <person name="Sebastian Y."/>
            <person name="Miller W.G."/>
            <person name="Mandrell R.E."/>
            <person name="On S."/>
            <person name="Nelson K.E."/>
        </authorList>
    </citation>
    <scope>NUCLEOTIDE SEQUENCE [LARGE SCALE GENOMIC DNA]</scope>
    <source>
        <strain>13826</strain>
    </source>
</reference>